<proteinExistence type="inferred from homology"/>
<keyword id="KW-0067">ATP-binding</keyword>
<keyword id="KW-0143">Chaperone</keyword>
<keyword id="KW-0479">Metal-binding</keyword>
<keyword id="KW-0547">Nucleotide-binding</keyword>
<keyword id="KW-1185">Reference proteome</keyword>
<keyword id="KW-0862">Zinc</keyword>
<sequence>MFKFTGEDKGQLKCSFCGKYQDQVKRLVAGPGVYICDECIELCNEIIEEELSEEVDFELKDVPKPAEIKAILDQYVIGQERAKRTLAVAVYNHYKRINLGSKLDDVELQKSNILMLGPTGSGKTLLAQTLARILNVPFAIADATSLTEAGYVGEDVENILLKLIQAADYDIEKAERGIVYIDEVDKIARKSENPSITRDVSGEGVQQALLKILEGTIASVPPQGGRKHPHQEFIQINTTNILFICGGAFDGIDKIIANRVGRSGLGFGADIRSKQEQNVGELLKQIMPEDLLKFGLIPEFIGRLPIVVTLDALDEDALVRILREPKNALVKQYQKLLQLDNIELEFEEEAVRAIAKEALRRNTGARGLRAIIEDIMTDVMYEVPSRTDVTKCVITKDVVLKKQEPILVTTNDAKSRRTKKEESA</sequence>
<dbReference type="EMBL" id="AP006840">
    <property type="protein sequence ID" value="BAD39344.1"/>
    <property type="molecule type" value="Genomic_DNA"/>
</dbReference>
<dbReference type="RefSeq" id="WP_011194493.1">
    <property type="nucleotide sequence ID" value="NC_006177.1"/>
</dbReference>
<dbReference type="SMR" id="Q67SJ9"/>
<dbReference type="STRING" id="292459.STH359"/>
<dbReference type="KEGG" id="sth:STH359"/>
<dbReference type="eggNOG" id="COG1219">
    <property type="taxonomic scope" value="Bacteria"/>
</dbReference>
<dbReference type="HOGENOM" id="CLU_014218_8_2_9"/>
<dbReference type="OrthoDB" id="9804062at2"/>
<dbReference type="Proteomes" id="UP000000417">
    <property type="component" value="Chromosome"/>
</dbReference>
<dbReference type="GO" id="GO:0009376">
    <property type="term" value="C:HslUV protease complex"/>
    <property type="evidence" value="ECO:0007669"/>
    <property type="project" value="TreeGrafter"/>
</dbReference>
<dbReference type="GO" id="GO:0005524">
    <property type="term" value="F:ATP binding"/>
    <property type="evidence" value="ECO:0007669"/>
    <property type="project" value="UniProtKB-UniRule"/>
</dbReference>
<dbReference type="GO" id="GO:0016887">
    <property type="term" value="F:ATP hydrolysis activity"/>
    <property type="evidence" value="ECO:0007669"/>
    <property type="project" value="InterPro"/>
</dbReference>
<dbReference type="GO" id="GO:0140662">
    <property type="term" value="F:ATP-dependent protein folding chaperone"/>
    <property type="evidence" value="ECO:0007669"/>
    <property type="project" value="InterPro"/>
</dbReference>
<dbReference type="GO" id="GO:0046983">
    <property type="term" value="F:protein dimerization activity"/>
    <property type="evidence" value="ECO:0007669"/>
    <property type="project" value="InterPro"/>
</dbReference>
<dbReference type="GO" id="GO:0051082">
    <property type="term" value="F:unfolded protein binding"/>
    <property type="evidence" value="ECO:0007669"/>
    <property type="project" value="UniProtKB-UniRule"/>
</dbReference>
<dbReference type="GO" id="GO:0008270">
    <property type="term" value="F:zinc ion binding"/>
    <property type="evidence" value="ECO:0007669"/>
    <property type="project" value="InterPro"/>
</dbReference>
<dbReference type="GO" id="GO:0051301">
    <property type="term" value="P:cell division"/>
    <property type="evidence" value="ECO:0007669"/>
    <property type="project" value="TreeGrafter"/>
</dbReference>
<dbReference type="GO" id="GO:0051603">
    <property type="term" value="P:proteolysis involved in protein catabolic process"/>
    <property type="evidence" value="ECO:0007669"/>
    <property type="project" value="TreeGrafter"/>
</dbReference>
<dbReference type="CDD" id="cd19497">
    <property type="entry name" value="RecA-like_ClpX"/>
    <property type="match status" value="1"/>
</dbReference>
<dbReference type="FunFam" id="1.10.8.60:FF:000002">
    <property type="entry name" value="ATP-dependent Clp protease ATP-binding subunit ClpX"/>
    <property type="match status" value="1"/>
</dbReference>
<dbReference type="FunFam" id="3.40.50.300:FF:000005">
    <property type="entry name" value="ATP-dependent Clp protease ATP-binding subunit ClpX"/>
    <property type="match status" value="1"/>
</dbReference>
<dbReference type="Gene3D" id="1.10.8.60">
    <property type="match status" value="1"/>
</dbReference>
<dbReference type="Gene3D" id="6.20.220.10">
    <property type="entry name" value="ClpX chaperone, C4-type zinc finger domain"/>
    <property type="match status" value="1"/>
</dbReference>
<dbReference type="Gene3D" id="3.40.50.300">
    <property type="entry name" value="P-loop containing nucleotide triphosphate hydrolases"/>
    <property type="match status" value="1"/>
</dbReference>
<dbReference type="HAMAP" id="MF_00175">
    <property type="entry name" value="ClpX"/>
    <property type="match status" value="1"/>
</dbReference>
<dbReference type="InterPro" id="IPR003593">
    <property type="entry name" value="AAA+_ATPase"/>
</dbReference>
<dbReference type="InterPro" id="IPR050052">
    <property type="entry name" value="ATP-dep_Clp_protease_ClpX"/>
</dbReference>
<dbReference type="InterPro" id="IPR003959">
    <property type="entry name" value="ATPase_AAA_core"/>
</dbReference>
<dbReference type="InterPro" id="IPR019489">
    <property type="entry name" value="Clp_ATPase_C"/>
</dbReference>
<dbReference type="InterPro" id="IPR004487">
    <property type="entry name" value="Clp_protease_ATP-bd_su_ClpX"/>
</dbReference>
<dbReference type="InterPro" id="IPR046425">
    <property type="entry name" value="ClpX_bact"/>
</dbReference>
<dbReference type="InterPro" id="IPR027417">
    <property type="entry name" value="P-loop_NTPase"/>
</dbReference>
<dbReference type="InterPro" id="IPR010603">
    <property type="entry name" value="Znf_CppX_C4"/>
</dbReference>
<dbReference type="InterPro" id="IPR038366">
    <property type="entry name" value="Znf_CppX_C4_sf"/>
</dbReference>
<dbReference type="NCBIfam" id="TIGR00382">
    <property type="entry name" value="clpX"/>
    <property type="match status" value="1"/>
</dbReference>
<dbReference type="NCBIfam" id="NF003745">
    <property type="entry name" value="PRK05342.1"/>
    <property type="match status" value="1"/>
</dbReference>
<dbReference type="PANTHER" id="PTHR48102:SF7">
    <property type="entry name" value="ATP-DEPENDENT CLP PROTEASE ATP-BINDING SUBUNIT CLPX-LIKE, MITOCHONDRIAL"/>
    <property type="match status" value="1"/>
</dbReference>
<dbReference type="PANTHER" id="PTHR48102">
    <property type="entry name" value="ATP-DEPENDENT CLP PROTEASE ATP-BINDING SUBUNIT CLPX-LIKE, MITOCHONDRIAL-RELATED"/>
    <property type="match status" value="1"/>
</dbReference>
<dbReference type="Pfam" id="PF07724">
    <property type="entry name" value="AAA_2"/>
    <property type="match status" value="1"/>
</dbReference>
<dbReference type="Pfam" id="PF10431">
    <property type="entry name" value="ClpB_D2-small"/>
    <property type="match status" value="1"/>
</dbReference>
<dbReference type="Pfam" id="PF06689">
    <property type="entry name" value="zf-C4_ClpX"/>
    <property type="match status" value="1"/>
</dbReference>
<dbReference type="SMART" id="SM00382">
    <property type="entry name" value="AAA"/>
    <property type="match status" value="1"/>
</dbReference>
<dbReference type="SMART" id="SM01086">
    <property type="entry name" value="ClpB_D2-small"/>
    <property type="match status" value="1"/>
</dbReference>
<dbReference type="SMART" id="SM00994">
    <property type="entry name" value="zf-C4_ClpX"/>
    <property type="match status" value="1"/>
</dbReference>
<dbReference type="SUPFAM" id="SSF57716">
    <property type="entry name" value="Glucocorticoid receptor-like (DNA-binding domain)"/>
    <property type="match status" value="1"/>
</dbReference>
<dbReference type="SUPFAM" id="SSF52540">
    <property type="entry name" value="P-loop containing nucleoside triphosphate hydrolases"/>
    <property type="match status" value="1"/>
</dbReference>
<dbReference type="PROSITE" id="PS51902">
    <property type="entry name" value="CLPX_ZB"/>
    <property type="match status" value="1"/>
</dbReference>
<feature type="chain" id="PRO_0000160438" description="ATP-dependent Clp protease ATP-binding subunit ClpX">
    <location>
        <begin position="1"/>
        <end position="424"/>
    </location>
</feature>
<feature type="domain" description="ClpX-type ZB" evidence="2">
    <location>
        <begin position="2"/>
        <end position="55"/>
    </location>
</feature>
<feature type="binding site" evidence="2">
    <location>
        <position position="14"/>
    </location>
    <ligand>
        <name>Zn(2+)</name>
        <dbReference type="ChEBI" id="CHEBI:29105"/>
    </ligand>
</feature>
<feature type="binding site" evidence="2">
    <location>
        <position position="17"/>
    </location>
    <ligand>
        <name>Zn(2+)</name>
        <dbReference type="ChEBI" id="CHEBI:29105"/>
    </ligand>
</feature>
<feature type="binding site" evidence="2">
    <location>
        <position position="36"/>
    </location>
    <ligand>
        <name>Zn(2+)</name>
        <dbReference type="ChEBI" id="CHEBI:29105"/>
    </ligand>
</feature>
<feature type="binding site" evidence="2">
    <location>
        <position position="39"/>
    </location>
    <ligand>
        <name>Zn(2+)</name>
        <dbReference type="ChEBI" id="CHEBI:29105"/>
    </ligand>
</feature>
<feature type="binding site" evidence="1">
    <location>
        <begin position="118"/>
        <end position="125"/>
    </location>
    <ligand>
        <name>ATP</name>
        <dbReference type="ChEBI" id="CHEBI:30616"/>
    </ligand>
</feature>
<accession>Q67SJ9</accession>
<gene>
    <name evidence="1" type="primary">clpX</name>
    <name type="ordered locus">STH359</name>
</gene>
<evidence type="ECO:0000255" key="1">
    <source>
        <dbReference type="HAMAP-Rule" id="MF_00175"/>
    </source>
</evidence>
<evidence type="ECO:0000255" key="2">
    <source>
        <dbReference type="PROSITE-ProRule" id="PRU01250"/>
    </source>
</evidence>
<protein>
    <recommendedName>
        <fullName evidence="1">ATP-dependent Clp protease ATP-binding subunit ClpX</fullName>
    </recommendedName>
</protein>
<name>CLPX_SYMTH</name>
<reference key="1">
    <citation type="journal article" date="2004" name="Nucleic Acids Res.">
        <title>Genome sequence of Symbiobacterium thermophilum, an uncultivable bacterium that depends on microbial commensalism.</title>
        <authorList>
            <person name="Ueda K."/>
            <person name="Yamashita A."/>
            <person name="Ishikawa J."/>
            <person name="Shimada M."/>
            <person name="Watsuji T."/>
            <person name="Morimura K."/>
            <person name="Ikeda H."/>
            <person name="Hattori M."/>
            <person name="Beppu T."/>
        </authorList>
    </citation>
    <scope>NUCLEOTIDE SEQUENCE [LARGE SCALE GENOMIC DNA]</scope>
    <source>
        <strain>DSM 24528 / JCM 14929 / IAM 14863 / T</strain>
    </source>
</reference>
<organism>
    <name type="scientific">Symbiobacterium thermophilum (strain DSM 24528 / JCM 14929 / IAM 14863 / T)</name>
    <dbReference type="NCBI Taxonomy" id="292459"/>
    <lineage>
        <taxon>Bacteria</taxon>
        <taxon>Bacillati</taxon>
        <taxon>Bacillota</taxon>
        <taxon>Clostridia</taxon>
        <taxon>Eubacteriales</taxon>
        <taxon>Symbiobacteriaceae</taxon>
        <taxon>Symbiobacterium</taxon>
    </lineage>
</organism>
<comment type="function">
    <text evidence="1">ATP-dependent specificity component of the Clp protease. It directs the protease to specific substrates. Can perform chaperone functions in the absence of ClpP.</text>
</comment>
<comment type="subunit">
    <text evidence="1">Component of the ClpX-ClpP complex. Forms a hexameric ring that, in the presence of ATP, binds to fourteen ClpP subunits assembled into a disk-like structure with a central cavity, resembling the structure of eukaryotic proteasomes.</text>
</comment>
<comment type="similarity">
    <text evidence="1">Belongs to the ClpX chaperone family.</text>
</comment>